<keyword id="KW-0328">Glycosyltransferase</keyword>
<keyword id="KW-1185">Reference proteome</keyword>
<keyword id="KW-0808">Transferase</keyword>
<accession>A8ACU7</accession>
<comment type="function">
    <text evidence="1">Catalyzes the synthesis of Und-PP-GlcNAc-ManNAcA (Lipid II), the second lipid-linked intermediate involved in enterobacterial common antigen (ECA) synthesis.</text>
</comment>
<comment type="catalytic activity">
    <reaction evidence="1">
        <text>UDP-N-acetyl-alpha-D-mannosaminouronate + N-acetyl-alpha-D-glucosaminyl-di-trans,octa-cis-undecaprenyl diphosphate = beta-D-ManNAcA-(1-&gt;4)-alpha-D-GlcNAc-di-trans,octa-cis-undecaprenyl diphosphate + UDP + H(+)</text>
        <dbReference type="Rhea" id="RHEA:28366"/>
        <dbReference type="ChEBI" id="CHEBI:15378"/>
        <dbReference type="ChEBI" id="CHEBI:58223"/>
        <dbReference type="ChEBI" id="CHEBI:61495"/>
        <dbReference type="ChEBI" id="CHEBI:62959"/>
        <dbReference type="ChEBI" id="CHEBI:70731"/>
        <dbReference type="EC" id="2.4.1.180"/>
    </reaction>
</comment>
<comment type="pathway">
    <text evidence="1">Bacterial outer membrane biogenesis; enterobacterial common antigen biosynthesis.</text>
</comment>
<comment type="similarity">
    <text evidence="1">Belongs to the glycosyltransferase 26 family.</text>
</comment>
<evidence type="ECO:0000255" key="1">
    <source>
        <dbReference type="HAMAP-Rule" id="MF_01001"/>
    </source>
</evidence>
<protein>
    <recommendedName>
        <fullName evidence="1">UDP-N-acetyl-D-mannosaminuronic acid transferase</fullName>
        <shortName evidence="1">UDP-ManNAcA transferase</shortName>
        <ecNumber evidence="1">2.4.1.180</ecNumber>
    </recommendedName>
</protein>
<reference key="1">
    <citation type="submission" date="2007-08" db="EMBL/GenBank/DDBJ databases">
        <authorList>
            <consortium name="The Citrobacter koseri Genome Sequencing Project"/>
            <person name="McClelland M."/>
            <person name="Sanderson E.K."/>
            <person name="Porwollik S."/>
            <person name="Spieth J."/>
            <person name="Clifton W.S."/>
            <person name="Latreille P."/>
            <person name="Courtney L."/>
            <person name="Wang C."/>
            <person name="Pepin K."/>
            <person name="Bhonagiri V."/>
            <person name="Nash W."/>
            <person name="Johnson M."/>
            <person name="Thiruvilangam P."/>
            <person name="Wilson R."/>
        </authorList>
    </citation>
    <scope>NUCLEOTIDE SEQUENCE [LARGE SCALE GENOMIC DNA]</scope>
    <source>
        <strain>ATCC BAA-895 / CDC 4225-83 / SGSC4696</strain>
    </source>
</reference>
<dbReference type="EC" id="2.4.1.180" evidence="1"/>
<dbReference type="EMBL" id="CP000822">
    <property type="protein sequence ID" value="ABV11310.1"/>
    <property type="molecule type" value="Genomic_DNA"/>
</dbReference>
<dbReference type="RefSeq" id="WP_012131145.1">
    <property type="nucleotide sequence ID" value="NC_009792.1"/>
</dbReference>
<dbReference type="SMR" id="A8ACU7"/>
<dbReference type="STRING" id="290338.CKO_00136"/>
<dbReference type="CAZy" id="GT26">
    <property type="family name" value="Glycosyltransferase Family 26"/>
</dbReference>
<dbReference type="GeneID" id="45134434"/>
<dbReference type="KEGG" id="cko:CKO_00136"/>
<dbReference type="HOGENOM" id="CLU_063203_3_2_6"/>
<dbReference type="OrthoDB" id="9808602at2"/>
<dbReference type="UniPathway" id="UPA00566"/>
<dbReference type="Proteomes" id="UP000008148">
    <property type="component" value="Chromosome"/>
</dbReference>
<dbReference type="GO" id="GO:0047241">
    <property type="term" value="F:lipopolysaccharide N-acetylmannosaminouronosyltransferase activity"/>
    <property type="evidence" value="ECO:0007669"/>
    <property type="project" value="UniProtKB-UniRule"/>
</dbReference>
<dbReference type="GO" id="GO:0009246">
    <property type="term" value="P:enterobacterial common antigen biosynthetic process"/>
    <property type="evidence" value="ECO:0007669"/>
    <property type="project" value="UniProtKB-UniRule"/>
</dbReference>
<dbReference type="CDD" id="cd06533">
    <property type="entry name" value="Glyco_transf_WecG_TagA"/>
    <property type="match status" value="1"/>
</dbReference>
<dbReference type="HAMAP" id="MF_01001">
    <property type="entry name" value="WecG_RffM"/>
    <property type="match status" value="1"/>
</dbReference>
<dbReference type="InterPro" id="IPR023085">
    <property type="entry name" value="UDP-ManNAcA_Trfase_WecG"/>
</dbReference>
<dbReference type="InterPro" id="IPR004629">
    <property type="entry name" value="WecG_TagA_CpsF"/>
</dbReference>
<dbReference type="NCBIfam" id="NF002980">
    <property type="entry name" value="PRK03692.1"/>
    <property type="match status" value="1"/>
</dbReference>
<dbReference type="NCBIfam" id="TIGR00696">
    <property type="entry name" value="wecG_tagA_cpsF"/>
    <property type="match status" value="1"/>
</dbReference>
<dbReference type="PANTHER" id="PTHR34136">
    <property type="match status" value="1"/>
</dbReference>
<dbReference type="PANTHER" id="PTHR34136:SF1">
    <property type="entry name" value="UDP-N-ACETYL-D-MANNOSAMINURONIC ACID TRANSFERASE"/>
    <property type="match status" value="1"/>
</dbReference>
<dbReference type="Pfam" id="PF03808">
    <property type="entry name" value="Glyco_tran_WecG"/>
    <property type="match status" value="1"/>
</dbReference>
<organism>
    <name type="scientific">Citrobacter koseri (strain ATCC BAA-895 / CDC 4225-83 / SGSC4696)</name>
    <dbReference type="NCBI Taxonomy" id="290338"/>
    <lineage>
        <taxon>Bacteria</taxon>
        <taxon>Pseudomonadati</taxon>
        <taxon>Pseudomonadota</taxon>
        <taxon>Gammaproteobacteria</taxon>
        <taxon>Enterobacterales</taxon>
        <taxon>Enterobacteriaceae</taxon>
        <taxon>Citrobacter</taxon>
    </lineage>
</organism>
<feature type="chain" id="PRO_1000062724" description="UDP-N-acetyl-D-mannosaminuronic acid transferase">
    <location>
        <begin position="1"/>
        <end position="246"/>
    </location>
</feature>
<sequence length="246" mass="27804">MTDNTTAPLYSLRGLQLIGWRDMQHALNYLFADGQMKQGTLVAINAEKMLTAEDDPEVRALIDAAEFKYADGISVVRSVRKKFPQAQVSRVAGADLWEELMARAGKEGTPVFLVGGKPEVLAQTEAKLRAQWNVNIVGSQDGYFKPEQRQALFERIHASGAKIVTVAMGSPKQEILMRDCRVIHPQALYMGVGGTYDVFTGHVKRAPKMWQTLGLEWLYRLLSQPSRITRQLRLLRYLRWHYTGNL</sequence>
<proteinExistence type="inferred from homology"/>
<gene>
    <name evidence="1" type="primary">wecG</name>
    <name evidence="1" type="synonym">rffM</name>
    <name type="ordered locus">CKO_00136</name>
</gene>
<name>WECG_CITK8</name>